<accession>P09950</accession>
<accession>D6VSL3</accession>
<accession>E9P946</accession>
<gene>
    <name evidence="7" type="primary">HEM1</name>
    <name type="synonym">CYD1</name>
    <name evidence="11" type="ordered locus">YDR232W</name>
    <name type="ORF">YD9934.16</name>
</gene>
<name>HEM1_YEAST</name>
<keyword id="KW-0002">3D-structure</keyword>
<keyword id="KW-0012">Acyltransferase</keyword>
<keyword id="KW-0350">Heme biosynthesis</keyword>
<keyword id="KW-0496">Mitochondrion</keyword>
<keyword id="KW-0663">Pyridoxal phosphate</keyword>
<keyword id="KW-1185">Reference proteome</keyword>
<keyword id="KW-0808">Transferase</keyword>
<keyword id="KW-0809">Transit peptide</keyword>
<proteinExistence type="evidence at protein level"/>
<sequence length="548" mass="59362">MQRSIFARFGNSSAAVSTLNRLSTTAAPHAKNGYATATGAGAAAATATASSTHAAAAAAAAANHSTQESGFDYEGLIDSELQKKRLDKSYRYFNNINRLAKEFPLAHRQREADKVTVWCSNDYLALSKHPEVLDAMHKTIDKYGCGAGGTRNIAGHNIPTLNLEAELATLHKKEGALVFSSCYVANDAVLSLLGQKMKDLVIFSDELNHASMIVGIKHANVKKHIFKHNDLNELEQLLQSYPKSVPKLIAFESVYSMAGSVADIEKICDLADKYGALTFLDEVHAVGLYGPHGAGVAEHCDFESHRASGIATPKTNDKGGAKTVMDRVDMITGTLGKSFGSVGGYVAASRKLIDWFRSFAPGFIFTTTLPPSVMAGATAAIRYQRCHIDLRTSQQKHTMYVKKAFHELGIPVIPNPSHIVPVLIGNADLAKQASDILINKHQIYVQAINFPTVARGTERLRITPTPGHTNDLSDILINAVDDVFNELQLPRVRDWESQGGLLGVGESGFVEESNLWTSSQLSLTNDDLNPNVRDPIVKQLEVSSGIKQ</sequence>
<evidence type="ECO:0000250" key="1">
    <source>
        <dbReference type="UniProtKB" id="P18079"/>
    </source>
</evidence>
<evidence type="ECO:0000255" key="2"/>
<evidence type="ECO:0000269" key="3">
    <source>
    </source>
</evidence>
<evidence type="ECO:0000269" key="4">
    <source>
    </source>
</evidence>
<evidence type="ECO:0000269" key="5">
    <source>
    </source>
</evidence>
<evidence type="ECO:0000269" key="6">
    <source>
    </source>
</evidence>
<evidence type="ECO:0000303" key="7">
    <source>
    </source>
</evidence>
<evidence type="ECO:0000303" key="8">
    <source>
    </source>
</evidence>
<evidence type="ECO:0000305" key="9"/>
<evidence type="ECO:0000305" key="10">
    <source>
    </source>
</evidence>
<evidence type="ECO:0000312" key="11">
    <source>
        <dbReference type="SGD" id="S000002640"/>
    </source>
</evidence>
<evidence type="ECO:0007829" key="12">
    <source>
        <dbReference type="PDB" id="5TXR"/>
    </source>
</evidence>
<evidence type="ECO:0007829" key="13">
    <source>
        <dbReference type="PDB" id="8EIM"/>
    </source>
</evidence>
<feature type="transit peptide" description="Mitochondrion" evidence="2">
    <location>
        <begin position="1"/>
        <end position="22"/>
    </location>
</feature>
<feature type="chain" id="PRO_0000001245" description="5-aminolevulinate synthase, mitochondrial">
    <location>
        <begin position="23"/>
        <end position="548"/>
    </location>
</feature>
<feature type="active site" evidence="1">
    <location>
        <position position="337"/>
    </location>
</feature>
<feature type="binding site" evidence="1">
    <location>
        <position position="91"/>
    </location>
    <ligand>
        <name>substrate</name>
    </ligand>
</feature>
<feature type="binding site" evidence="1">
    <location>
        <position position="204"/>
    </location>
    <ligand>
        <name>substrate</name>
    </ligand>
</feature>
<feature type="binding site" evidence="1">
    <location>
        <position position="223"/>
    </location>
    <ligand>
        <name>substrate</name>
    </ligand>
</feature>
<feature type="binding site" description="in other chain" evidence="1">
    <location>
        <position position="256"/>
    </location>
    <ligand>
        <name>pyridoxal 5'-phosphate</name>
        <dbReference type="ChEBI" id="CHEBI:597326"/>
        <note>ligand shared between dimeric partners</note>
    </ligand>
</feature>
<feature type="binding site" description="in other chain" evidence="1">
    <location>
        <position position="284"/>
    </location>
    <ligand>
        <name>pyridoxal 5'-phosphate</name>
        <dbReference type="ChEBI" id="CHEBI:597326"/>
        <note>ligand shared between dimeric partners</note>
    </ligand>
</feature>
<feature type="binding site" description="in other chain" evidence="1">
    <location>
        <position position="334"/>
    </location>
    <ligand>
        <name>pyridoxal 5'-phosphate</name>
        <dbReference type="ChEBI" id="CHEBI:597326"/>
        <note>ligand shared between dimeric partners</note>
    </ligand>
</feature>
<feature type="binding site" evidence="1">
    <location>
        <position position="366"/>
    </location>
    <ligand>
        <name>pyridoxal 5'-phosphate</name>
        <dbReference type="ChEBI" id="CHEBI:597326"/>
        <note>ligand shared between dimeric partners</note>
    </ligand>
</feature>
<feature type="binding site" evidence="1">
    <location>
        <position position="367"/>
    </location>
    <ligand>
        <name>pyridoxal 5'-phosphate</name>
        <dbReference type="ChEBI" id="CHEBI:597326"/>
        <note>ligand shared between dimeric partners</note>
    </ligand>
</feature>
<feature type="binding site" evidence="1">
    <location>
        <position position="452"/>
    </location>
    <ligand>
        <name>substrate</name>
    </ligand>
</feature>
<feature type="modified residue" description="N6-(pyridoxal phosphate)lysine" evidence="1">
    <location>
        <position position="337"/>
    </location>
</feature>
<feature type="mutagenesis site" description="Lethal in combination with a MCX1 disruption." evidence="4">
    <original>G</original>
    <variation>R</variation>
    <location>
        <position position="275"/>
    </location>
</feature>
<feature type="sequence conflict" description="In Ref. 4; AAU09697." evidence="9" ref="4">
    <original>S</original>
    <variation>P</variation>
    <location>
        <position position="181"/>
    </location>
</feature>
<feature type="helix" evidence="12">
    <location>
        <begin position="73"/>
        <end position="86"/>
    </location>
</feature>
<feature type="strand" evidence="13">
    <location>
        <begin position="90"/>
        <end position="93"/>
    </location>
</feature>
<feature type="turn" evidence="13">
    <location>
        <begin position="94"/>
        <end position="97"/>
    </location>
</feature>
<feature type="strand" evidence="13">
    <location>
        <begin position="98"/>
        <end position="101"/>
    </location>
</feature>
<feature type="strand" evidence="12">
    <location>
        <begin position="105"/>
        <end position="107"/>
    </location>
</feature>
<feature type="strand" evidence="12">
    <location>
        <begin position="114"/>
        <end position="117"/>
    </location>
</feature>
<feature type="helix" evidence="12">
    <location>
        <begin position="126"/>
        <end position="128"/>
    </location>
</feature>
<feature type="helix" evidence="12">
    <location>
        <begin position="130"/>
        <end position="143"/>
    </location>
</feature>
<feature type="helix" evidence="13">
    <location>
        <begin position="147"/>
        <end position="149"/>
    </location>
</feature>
<feature type="turn" evidence="12">
    <location>
        <begin position="151"/>
        <end position="153"/>
    </location>
</feature>
<feature type="helix" evidence="12">
    <location>
        <begin position="158"/>
        <end position="171"/>
    </location>
</feature>
<feature type="strand" evidence="12">
    <location>
        <begin position="174"/>
        <end position="180"/>
    </location>
</feature>
<feature type="helix" evidence="12">
    <location>
        <begin position="182"/>
        <end position="196"/>
    </location>
</feature>
<feature type="strand" evidence="12">
    <location>
        <begin position="201"/>
        <end position="205"/>
    </location>
</feature>
<feature type="helix" evidence="12">
    <location>
        <begin position="210"/>
        <end position="219"/>
    </location>
</feature>
<feature type="strand" evidence="12">
    <location>
        <begin position="221"/>
        <end position="226"/>
    </location>
</feature>
<feature type="helix" evidence="12">
    <location>
        <begin position="231"/>
        <end position="239"/>
    </location>
</feature>
<feature type="strand" evidence="12">
    <location>
        <begin position="247"/>
        <end position="255"/>
    </location>
</feature>
<feature type="turn" evidence="12">
    <location>
        <begin position="256"/>
        <end position="259"/>
    </location>
</feature>
<feature type="helix" evidence="12">
    <location>
        <begin position="264"/>
        <end position="274"/>
    </location>
</feature>
<feature type="strand" evidence="12">
    <location>
        <begin position="276"/>
        <end position="281"/>
    </location>
</feature>
<feature type="turn" evidence="12">
    <location>
        <begin position="283"/>
        <end position="288"/>
    </location>
</feature>
<feature type="helix" evidence="12">
    <location>
        <begin position="296"/>
        <end position="300"/>
    </location>
</feature>
<feature type="helix" evidence="12">
    <location>
        <begin position="302"/>
        <end position="308"/>
    </location>
</feature>
<feature type="helix" evidence="12">
    <location>
        <begin position="324"/>
        <end position="327"/>
    </location>
</feature>
<feature type="strand" evidence="12">
    <location>
        <begin position="329"/>
        <end position="337"/>
    </location>
</feature>
<feature type="strand" evidence="12">
    <location>
        <begin position="344"/>
        <end position="348"/>
    </location>
</feature>
<feature type="helix" evidence="12">
    <location>
        <begin position="350"/>
        <end position="359"/>
    </location>
</feature>
<feature type="helix" evidence="12">
    <location>
        <begin position="361"/>
        <end position="364"/>
    </location>
</feature>
<feature type="helix" evidence="12">
    <location>
        <begin position="371"/>
        <end position="385"/>
    </location>
</feature>
<feature type="helix" evidence="12">
    <location>
        <begin position="389"/>
        <end position="408"/>
    </location>
</feature>
<feature type="strand" evidence="12">
    <location>
        <begin position="416"/>
        <end position="418"/>
    </location>
</feature>
<feature type="strand" evidence="12">
    <location>
        <begin position="420"/>
        <end position="423"/>
    </location>
</feature>
<feature type="helix" evidence="12">
    <location>
        <begin position="427"/>
        <end position="441"/>
    </location>
</feature>
<feature type="strand" evidence="13">
    <location>
        <begin position="446"/>
        <end position="448"/>
    </location>
</feature>
<feature type="turn" evidence="12">
    <location>
        <begin position="450"/>
        <end position="452"/>
    </location>
</feature>
<feature type="strand" evidence="12">
    <location>
        <begin position="459"/>
        <end position="462"/>
    </location>
</feature>
<feature type="helix" evidence="12">
    <location>
        <begin position="470"/>
        <end position="487"/>
    </location>
</feature>
<feature type="helix" evidence="12">
    <location>
        <begin position="492"/>
        <end position="497"/>
    </location>
</feature>
<feature type="helix" evidence="12">
    <location>
        <begin position="518"/>
        <end position="521"/>
    </location>
</feature>
<feature type="helix" evidence="12">
    <location>
        <begin position="525"/>
        <end position="527"/>
    </location>
</feature>
<feature type="helix" evidence="12">
    <location>
        <begin position="530"/>
        <end position="532"/>
    </location>
</feature>
<feature type="helix" evidence="12">
    <location>
        <begin position="541"/>
        <end position="543"/>
    </location>
</feature>
<protein>
    <recommendedName>
        <fullName evidence="8">5-aminolevulinate synthase, mitochondrial</fullName>
        <ecNumber evidence="6">2.3.1.37</ecNumber>
    </recommendedName>
    <alternativeName>
        <fullName>5-aminolevulinic acid synthase</fullName>
    </alternativeName>
    <alternativeName>
        <fullName>Delta-ALA synthase</fullName>
    </alternativeName>
    <alternativeName>
        <fullName>Delta-aminolevulinate synthase</fullName>
    </alternativeName>
</protein>
<organism>
    <name type="scientific">Saccharomyces cerevisiae (strain ATCC 204508 / S288c)</name>
    <name type="common">Baker's yeast</name>
    <dbReference type="NCBI Taxonomy" id="559292"/>
    <lineage>
        <taxon>Eukaryota</taxon>
        <taxon>Fungi</taxon>
        <taxon>Dikarya</taxon>
        <taxon>Ascomycota</taxon>
        <taxon>Saccharomycotina</taxon>
        <taxon>Saccharomycetes</taxon>
        <taxon>Saccharomycetales</taxon>
        <taxon>Saccharomycetaceae</taxon>
        <taxon>Saccharomyces</taxon>
    </lineage>
</organism>
<comment type="function">
    <text evidence="6">Catalyzes the synthesis of 5-aminolevulinate (ALA) from succinyl-CoA and glycine, the first and rate-limiting step in heme biosynthesis.</text>
</comment>
<comment type="catalytic activity">
    <reaction evidence="6">
        <text>succinyl-CoA + glycine + H(+) = 5-aminolevulinate + CO2 + CoA</text>
        <dbReference type="Rhea" id="RHEA:12921"/>
        <dbReference type="ChEBI" id="CHEBI:15378"/>
        <dbReference type="ChEBI" id="CHEBI:16526"/>
        <dbReference type="ChEBI" id="CHEBI:57287"/>
        <dbReference type="ChEBI" id="CHEBI:57292"/>
        <dbReference type="ChEBI" id="CHEBI:57305"/>
        <dbReference type="ChEBI" id="CHEBI:356416"/>
        <dbReference type="EC" id="2.3.1.37"/>
    </reaction>
</comment>
<comment type="cofactor">
    <cofactor evidence="6">
        <name>pyridoxal 5'-phosphate</name>
        <dbReference type="ChEBI" id="CHEBI:597326"/>
    </cofactor>
</comment>
<comment type="activity regulation">
    <text evidence="6">Ihnhibited by hemin.</text>
</comment>
<comment type="biophysicochemical properties">
    <kinetics>
        <KM evidence="6">3 mM for glycine</KM>
        <KM evidence="6">2 uM for succinyl-CoA</KM>
    </kinetics>
    <phDependence>
        <text evidence="6">Optimum pH is 7.4.</text>
    </phDependence>
</comment>
<comment type="pathway">
    <text evidence="10">Porphyrin-containing compound metabolism; protoporphyrin-IX biosynthesis; 5-aminolevulinate from glycine: step 1/1.</text>
</comment>
<comment type="subunit">
    <text evidence="4 6">Homodimer (PubMed:6381051). Interacts with MCX1 (PubMed:25957689).</text>
</comment>
<comment type="subcellular location">
    <subcellularLocation>
        <location evidence="5 6">Mitochondrion matrix</location>
    </subcellularLocation>
</comment>
<comment type="disruption phenotype">
    <text evidence="4">In combination with a disruption of MCX1, abrogates mitochondrial respiration.</text>
</comment>
<comment type="miscellaneous">
    <text evidence="3">Present with 22600 molecules/cell in log phase SD medium.</text>
</comment>
<comment type="similarity">
    <text evidence="9">Belongs to the class-II pyridoxal-phosphate-dependent aminotransferase family.</text>
</comment>
<reference key="1">
    <citation type="journal article" date="1986" name="Eur. J. Biochem.">
        <title>The nucleotide sequence of the HEM1 gene and evidence for a precursor form of the mitochondrial 5-aminolevulinate synthase in Saccharomyces cerevisiae.</title>
        <authorList>
            <person name="Urban-Grimal D."/>
            <person name="Volland C."/>
            <person name="Garnier T."/>
            <person name="Dehoux P."/>
            <person name="Labbe-Bois R."/>
        </authorList>
    </citation>
    <scope>NUCLEOTIDE SEQUENCE [GENOMIC DNA]</scope>
</reference>
<reference key="2">
    <citation type="journal article" date="1997" name="Nature">
        <title>The nucleotide sequence of Saccharomyces cerevisiae chromosome IV.</title>
        <authorList>
            <person name="Jacq C."/>
            <person name="Alt-Moerbe J."/>
            <person name="Andre B."/>
            <person name="Arnold W."/>
            <person name="Bahr A."/>
            <person name="Ballesta J.P.G."/>
            <person name="Bargues M."/>
            <person name="Baron L."/>
            <person name="Becker A."/>
            <person name="Biteau N."/>
            <person name="Bloecker H."/>
            <person name="Blugeon C."/>
            <person name="Boskovic J."/>
            <person name="Brandt P."/>
            <person name="Brueckner M."/>
            <person name="Buitrago M.J."/>
            <person name="Coster F."/>
            <person name="Delaveau T."/>
            <person name="del Rey F."/>
            <person name="Dujon B."/>
            <person name="Eide L.G."/>
            <person name="Garcia-Cantalejo J.M."/>
            <person name="Goffeau A."/>
            <person name="Gomez-Peris A."/>
            <person name="Granotier C."/>
            <person name="Hanemann V."/>
            <person name="Hankeln T."/>
            <person name="Hoheisel J.D."/>
            <person name="Jaeger W."/>
            <person name="Jimenez A."/>
            <person name="Jonniaux J.-L."/>
            <person name="Kraemer C."/>
            <person name="Kuester H."/>
            <person name="Laamanen P."/>
            <person name="Legros Y."/>
            <person name="Louis E.J."/>
            <person name="Moeller-Rieker S."/>
            <person name="Monnet A."/>
            <person name="Moro M."/>
            <person name="Mueller-Auer S."/>
            <person name="Nussbaumer B."/>
            <person name="Paricio N."/>
            <person name="Paulin L."/>
            <person name="Perea J."/>
            <person name="Perez-Alonso M."/>
            <person name="Perez-Ortin J.E."/>
            <person name="Pohl T.M."/>
            <person name="Prydz H."/>
            <person name="Purnelle B."/>
            <person name="Rasmussen S.W."/>
            <person name="Remacha M.A."/>
            <person name="Revuelta J.L."/>
            <person name="Rieger M."/>
            <person name="Salom D."/>
            <person name="Saluz H.P."/>
            <person name="Saiz J.E."/>
            <person name="Saren A.-M."/>
            <person name="Schaefer M."/>
            <person name="Scharfe M."/>
            <person name="Schmidt E.R."/>
            <person name="Schneider C."/>
            <person name="Scholler P."/>
            <person name="Schwarz S."/>
            <person name="Soler-Mira A."/>
            <person name="Urrestarazu L.A."/>
            <person name="Verhasselt P."/>
            <person name="Vissers S."/>
            <person name="Voet M."/>
            <person name="Volckaert G."/>
            <person name="Wagner G."/>
            <person name="Wambutt R."/>
            <person name="Wedler E."/>
            <person name="Wedler H."/>
            <person name="Woelfl S."/>
            <person name="Harris D.E."/>
            <person name="Bowman S."/>
            <person name="Brown D."/>
            <person name="Churcher C.M."/>
            <person name="Connor R."/>
            <person name="Dedman K."/>
            <person name="Gentles S."/>
            <person name="Hamlin N."/>
            <person name="Hunt S."/>
            <person name="Jones L."/>
            <person name="McDonald S."/>
            <person name="Murphy L.D."/>
            <person name="Niblett D."/>
            <person name="Odell C."/>
            <person name="Oliver K."/>
            <person name="Rajandream M.A."/>
            <person name="Richards C."/>
            <person name="Shore L."/>
            <person name="Walsh S.V."/>
            <person name="Barrell B.G."/>
            <person name="Dietrich F.S."/>
            <person name="Mulligan J.T."/>
            <person name="Allen E."/>
            <person name="Araujo R."/>
            <person name="Aviles E."/>
            <person name="Berno A."/>
            <person name="Carpenter J."/>
            <person name="Chen E."/>
            <person name="Cherry J.M."/>
            <person name="Chung E."/>
            <person name="Duncan M."/>
            <person name="Hunicke-Smith S."/>
            <person name="Hyman R.W."/>
            <person name="Komp C."/>
            <person name="Lashkari D."/>
            <person name="Lew H."/>
            <person name="Lin D."/>
            <person name="Mosedale D."/>
            <person name="Nakahara K."/>
            <person name="Namath A."/>
            <person name="Oefner P."/>
            <person name="Oh C."/>
            <person name="Petel F.X."/>
            <person name="Roberts D."/>
            <person name="Schramm S."/>
            <person name="Schroeder M."/>
            <person name="Shogren T."/>
            <person name="Shroff N."/>
            <person name="Winant A."/>
            <person name="Yelton M.A."/>
            <person name="Botstein D."/>
            <person name="Davis R.W."/>
            <person name="Johnston M."/>
            <person name="Andrews S."/>
            <person name="Brinkman R."/>
            <person name="Cooper J."/>
            <person name="Ding H."/>
            <person name="Du Z."/>
            <person name="Favello A."/>
            <person name="Fulton L."/>
            <person name="Gattung S."/>
            <person name="Greco T."/>
            <person name="Hallsworth K."/>
            <person name="Hawkins J."/>
            <person name="Hillier L.W."/>
            <person name="Jier M."/>
            <person name="Johnson D."/>
            <person name="Johnston L."/>
            <person name="Kirsten J."/>
            <person name="Kucaba T."/>
            <person name="Langston Y."/>
            <person name="Latreille P."/>
            <person name="Le T."/>
            <person name="Mardis E."/>
            <person name="Menezes S."/>
            <person name="Miller N."/>
            <person name="Nhan M."/>
            <person name="Pauley A."/>
            <person name="Peluso D."/>
            <person name="Rifkin L."/>
            <person name="Riles L."/>
            <person name="Taich A."/>
            <person name="Trevaskis E."/>
            <person name="Vignati D."/>
            <person name="Wilcox L."/>
            <person name="Wohldman P."/>
            <person name="Vaudin M."/>
            <person name="Wilson R."/>
            <person name="Waterston R."/>
            <person name="Albermann K."/>
            <person name="Hani J."/>
            <person name="Heumann K."/>
            <person name="Kleine K."/>
            <person name="Mewes H.-W."/>
            <person name="Zollner A."/>
            <person name="Zaccaria P."/>
        </authorList>
    </citation>
    <scope>NUCLEOTIDE SEQUENCE [LARGE SCALE GENOMIC DNA]</scope>
    <source>
        <strain>ATCC 204508 / S288c</strain>
    </source>
</reference>
<reference key="3">
    <citation type="journal article" date="2014" name="G3 (Bethesda)">
        <title>The reference genome sequence of Saccharomyces cerevisiae: Then and now.</title>
        <authorList>
            <person name="Engel S.R."/>
            <person name="Dietrich F.S."/>
            <person name="Fisk D.G."/>
            <person name="Binkley G."/>
            <person name="Balakrishnan R."/>
            <person name="Costanzo M.C."/>
            <person name="Dwight S.S."/>
            <person name="Hitz B.C."/>
            <person name="Karra K."/>
            <person name="Nash R.S."/>
            <person name="Weng S."/>
            <person name="Wong E.D."/>
            <person name="Lloyd P."/>
            <person name="Skrzypek M.S."/>
            <person name="Miyasato S.R."/>
            <person name="Simison M."/>
            <person name="Cherry J.M."/>
        </authorList>
    </citation>
    <scope>GENOME REANNOTATION</scope>
    <source>
        <strain>ATCC 204508 / S288c</strain>
    </source>
</reference>
<reference key="4">
    <citation type="journal article" date="2007" name="Genome Res.">
        <title>Approaching a complete repository of sequence-verified protein-encoding clones for Saccharomyces cerevisiae.</title>
        <authorList>
            <person name="Hu Y."/>
            <person name="Rolfs A."/>
            <person name="Bhullar B."/>
            <person name="Murthy T.V.S."/>
            <person name="Zhu C."/>
            <person name="Berger M.F."/>
            <person name="Camargo A.A."/>
            <person name="Kelley F."/>
            <person name="McCarron S."/>
            <person name="Jepson D."/>
            <person name="Richardson A."/>
            <person name="Raphael J."/>
            <person name="Moreira D."/>
            <person name="Taycher E."/>
            <person name="Zuo D."/>
            <person name="Mohr S."/>
            <person name="Kane M.F."/>
            <person name="Williamson J."/>
            <person name="Simpson A.J.G."/>
            <person name="Bulyk M.L."/>
            <person name="Harlow E."/>
            <person name="Marsischky G."/>
            <person name="Kolodner R.D."/>
            <person name="LaBaer J."/>
        </authorList>
    </citation>
    <scope>NUCLEOTIDE SEQUENCE [GENOMIC DNA]</scope>
    <source>
        <strain>ATCC 204508 / S288c</strain>
    </source>
</reference>
<reference key="5">
    <citation type="journal article" date="1986" name="Mol. Cell. Biol.">
        <title>The nine amino-terminal residues of delta-aminolevulinate synthase direct beta-galactosidase into the mitochondrial matrix.</title>
        <authorList>
            <person name="Keng T."/>
            <person name="Alani E."/>
            <person name="Guarente L."/>
        </authorList>
    </citation>
    <scope>NUCLEOTIDE SEQUENCE [GENOMIC DNA] OF 1-75</scope>
    <scope>SUBCELLULAR LOCATION</scope>
</reference>
<reference key="6">
    <citation type="journal article" date="1987" name="Proc. Natl. Acad. Sci. U.S.A.">
        <title>Constitutive expression of the yeast HEM1 gene is actually a composite of activation and repression.</title>
        <authorList>
            <person name="Keng T."/>
            <person name="Guarente L."/>
        </authorList>
    </citation>
    <scope>NUCLEOTIDE SEQUENCE [GENOMIC DNA] OF 1-2</scope>
</reference>
<reference key="7">
    <citation type="journal article" date="1984" name="Eur. J. Biochem.">
        <title>Isolation and properties of 5-aminolevulinate synthase from the yeast Saccharomyces cerevisiae.</title>
        <authorList>
            <person name="Volland C."/>
            <person name="Felix F."/>
        </authorList>
    </citation>
    <scope>FUNCTION</scope>
    <scope>SUBUNIT</scope>
    <scope>BIOPHYSICOCHEMICAL PROPERTIES</scope>
    <scope>COFACTOR</scope>
    <scope>CATALYTIC ACTIVITY</scope>
    <scope>ACTIVITY REGULATION</scope>
    <scope>SUBCELLULAR LOCATION</scope>
</reference>
<reference key="8">
    <citation type="journal article" date="2003" name="Nature">
        <title>Global analysis of protein expression in yeast.</title>
        <authorList>
            <person name="Ghaemmaghami S."/>
            <person name="Huh W.-K."/>
            <person name="Bower K."/>
            <person name="Howson R.W."/>
            <person name="Belle A."/>
            <person name="Dephoure N."/>
            <person name="O'Shea E.K."/>
            <person name="Weissman J.S."/>
        </authorList>
    </citation>
    <scope>LEVEL OF PROTEIN EXPRESSION [LARGE SCALE ANALYSIS]</scope>
</reference>
<reference key="9">
    <citation type="journal article" date="2015" name="Cell">
        <title>Mitochondrial ClpX activates a key enzyme for heme biosynthesis and erythropoiesis.</title>
        <authorList>
            <person name="Kardon J.R."/>
            <person name="Yien Y.Y."/>
            <person name="Huston N.C."/>
            <person name="Branco D.S."/>
            <person name="Hildick-Smith G.J."/>
            <person name="Rhee K.Y."/>
            <person name="Paw B.H."/>
            <person name="Baker T.A."/>
        </authorList>
    </citation>
    <scope>DISRUPTION PHENOTYPE</scope>
    <scope>MUTAGENESIS OF GLY-275</scope>
    <scope>INTERACTION WITH MCX1</scope>
</reference>
<dbReference type="EC" id="2.3.1.37" evidence="6"/>
<dbReference type="EMBL" id="M26329">
    <property type="protein sequence ID" value="AAA34668.1"/>
    <property type="molecule type" value="Genomic_DNA"/>
</dbReference>
<dbReference type="EMBL" id="Z48612">
    <property type="protein sequence ID" value="CAA88511.1"/>
    <property type="molecule type" value="Genomic_DNA"/>
</dbReference>
<dbReference type="EMBL" id="AY723780">
    <property type="protein sequence ID" value="AAU09697.1"/>
    <property type="molecule type" value="Genomic_DNA"/>
</dbReference>
<dbReference type="EMBL" id="J03556">
    <property type="status" value="NOT_ANNOTATED_CDS"/>
    <property type="molecule type" value="Genomic_DNA"/>
</dbReference>
<dbReference type="EMBL" id="BK006938">
    <property type="protein sequence ID" value="DAA12073.1"/>
    <property type="molecule type" value="Genomic_DNA"/>
</dbReference>
<dbReference type="PIR" id="A24870">
    <property type="entry name" value="SYBYAL"/>
</dbReference>
<dbReference type="RefSeq" id="NP_010518.1">
    <property type="nucleotide sequence ID" value="NM_001180540.1"/>
</dbReference>
<dbReference type="PDB" id="5TXR">
    <property type="method" value="X-ray"/>
    <property type="resolution" value="1.90 A"/>
    <property type="chains" value="A/B=58-548"/>
</dbReference>
<dbReference type="PDB" id="5TXT">
    <property type="method" value="X-ray"/>
    <property type="resolution" value="2.70 A"/>
    <property type="chains" value="A/B/C/D/E/F=58-548"/>
</dbReference>
<dbReference type="PDB" id="8EIM">
    <property type="method" value="X-ray"/>
    <property type="resolution" value="2.10 A"/>
    <property type="chains" value="A/B=58-534"/>
</dbReference>
<dbReference type="PDBsum" id="5TXR"/>
<dbReference type="PDBsum" id="5TXT"/>
<dbReference type="PDBsum" id="8EIM"/>
<dbReference type="SMR" id="P09950"/>
<dbReference type="BioGRID" id="32283">
    <property type="interactions" value="206"/>
</dbReference>
<dbReference type="FunCoup" id="P09950">
    <property type="interactions" value="613"/>
</dbReference>
<dbReference type="IntAct" id="P09950">
    <property type="interactions" value="9"/>
</dbReference>
<dbReference type="STRING" id="4932.YDR232W"/>
<dbReference type="GlyGen" id="P09950">
    <property type="glycosylation" value="1 site"/>
</dbReference>
<dbReference type="iPTMnet" id="P09950"/>
<dbReference type="PaxDb" id="4932-YDR232W"/>
<dbReference type="PeptideAtlas" id="P09950"/>
<dbReference type="EnsemblFungi" id="YDR232W_mRNA">
    <property type="protein sequence ID" value="YDR232W"/>
    <property type="gene ID" value="YDR232W"/>
</dbReference>
<dbReference type="GeneID" id="851818"/>
<dbReference type="KEGG" id="sce:YDR232W"/>
<dbReference type="AGR" id="SGD:S000002640"/>
<dbReference type="SGD" id="S000002640">
    <property type="gene designation" value="HEM1"/>
</dbReference>
<dbReference type="VEuPathDB" id="FungiDB:YDR232W"/>
<dbReference type="eggNOG" id="KOG1360">
    <property type="taxonomic scope" value="Eukaryota"/>
</dbReference>
<dbReference type="GeneTree" id="ENSGT00940000170004"/>
<dbReference type="HOGENOM" id="CLU_015846_6_0_1"/>
<dbReference type="InParanoid" id="P09950"/>
<dbReference type="OMA" id="ARRCPIM"/>
<dbReference type="OrthoDB" id="10263824at2759"/>
<dbReference type="BioCyc" id="YEAST:YDR232W-MONOMER"/>
<dbReference type="BRENDA" id="2.3.1.37">
    <property type="organism ID" value="984"/>
</dbReference>
<dbReference type="Reactome" id="R-SCE-189451">
    <property type="pathway name" value="Heme biosynthesis"/>
</dbReference>
<dbReference type="UniPathway" id="UPA00251">
    <property type="reaction ID" value="UER00375"/>
</dbReference>
<dbReference type="BioGRID-ORCS" id="851818">
    <property type="hits" value="4 hits in 10 CRISPR screens"/>
</dbReference>
<dbReference type="PRO" id="PR:P09950"/>
<dbReference type="Proteomes" id="UP000002311">
    <property type="component" value="Chromosome IV"/>
</dbReference>
<dbReference type="RNAct" id="P09950">
    <property type="molecule type" value="protein"/>
</dbReference>
<dbReference type="GO" id="GO:0005759">
    <property type="term" value="C:mitochondrial matrix"/>
    <property type="evidence" value="ECO:0000314"/>
    <property type="project" value="SGD"/>
</dbReference>
<dbReference type="GO" id="GO:0005739">
    <property type="term" value="C:mitochondrion"/>
    <property type="evidence" value="ECO:0007005"/>
    <property type="project" value="SGD"/>
</dbReference>
<dbReference type="GO" id="GO:0003870">
    <property type="term" value="F:5-aminolevulinate synthase activity"/>
    <property type="evidence" value="ECO:0000314"/>
    <property type="project" value="SGD"/>
</dbReference>
<dbReference type="GO" id="GO:0030170">
    <property type="term" value="F:pyridoxal phosphate binding"/>
    <property type="evidence" value="ECO:0007669"/>
    <property type="project" value="InterPro"/>
</dbReference>
<dbReference type="GO" id="GO:0006783">
    <property type="term" value="P:heme biosynthetic process"/>
    <property type="evidence" value="ECO:0000315"/>
    <property type="project" value="SGD"/>
</dbReference>
<dbReference type="GO" id="GO:1902117">
    <property type="term" value="P:positive regulation of organelle assembly"/>
    <property type="evidence" value="ECO:0000315"/>
    <property type="project" value="SGD"/>
</dbReference>
<dbReference type="GO" id="GO:0006782">
    <property type="term" value="P:protoporphyrinogen IX biosynthetic process"/>
    <property type="evidence" value="ECO:0007669"/>
    <property type="project" value="UniProtKB-UniPathway"/>
</dbReference>
<dbReference type="CDD" id="cd06454">
    <property type="entry name" value="KBL_like"/>
    <property type="match status" value="1"/>
</dbReference>
<dbReference type="DisProt" id="DP02768"/>
<dbReference type="FunFam" id="3.40.640.10:FF:000006">
    <property type="entry name" value="5-aminolevulinate synthase, mitochondrial"/>
    <property type="match status" value="1"/>
</dbReference>
<dbReference type="Gene3D" id="3.90.1150.10">
    <property type="entry name" value="Aspartate Aminotransferase, domain 1"/>
    <property type="match status" value="1"/>
</dbReference>
<dbReference type="Gene3D" id="3.40.640.10">
    <property type="entry name" value="Type I PLP-dependent aspartate aminotransferase-like (Major domain)"/>
    <property type="match status" value="1"/>
</dbReference>
<dbReference type="InterPro" id="IPR010961">
    <property type="entry name" value="4pyrrol_synth_NH2levulA_synth"/>
</dbReference>
<dbReference type="InterPro" id="IPR001917">
    <property type="entry name" value="Aminotrans_II_pyridoxalP_BS"/>
</dbReference>
<dbReference type="InterPro" id="IPR004839">
    <property type="entry name" value="Aminotransferase_I/II_large"/>
</dbReference>
<dbReference type="InterPro" id="IPR050087">
    <property type="entry name" value="AON_synthase_class-II"/>
</dbReference>
<dbReference type="InterPro" id="IPR015424">
    <property type="entry name" value="PyrdxlP-dep_Trfase"/>
</dbReference>
<dbReference type="InterPro" id="IPR015421">
    <property type="entry name" value="PyrdxlP-dep_Trfase_major"/>
</dbReference>
<dbReference type="InterPro" id="IPR015422">
    <property type="entry name" value="PyrdxlP-dep_Trfase_small"/>
</dbReference>
<dbReference type="NCBIfam" id="TIGR01821">
    <property type="entry name" value="5aminolev_synth"/>
    <property type="match status" value="1"/>
</dbReference>
<dbReference type="PANTHER" id="PTHR13693:SF102">
    <property type="entry name" value="2-AMINO-3-KETOBUTYRATE COENZYME A LIGASE, MITOCHONDRIAL"/>
    <property type="match status" value="1"/>
</dbReference>
<dbReference type="PANTHER" id="PTHR13693">
    <property type="entry name" value="CLASS II AMINOTRANSFERASE/8-AMINO-7-OXONONANOATE SYNTHASE"/>
    <property type="match status" value="1"/>
</dbReference>
<dbReference type="Pfam" id="PF00155">
    <property type="entry name" value="Aminotran_1_2"/>
    <property type="match status" value="1"/>
</dbReference>
<dbReference type="SUPFAM" id="SSF53383">
    <property type="entry name" value="PLP-dependent transferases"/>
    <property type="match status" value="1"/>
</dbReference>
<dbReference type="PROSITE" id="PS00599">
    <property type="entry name" value="AA_TRANSFER_CLASS_2"/>
    <property type="match status" value="1"/>
</dbReference>